<comment type="catalytic activity">
    <reaction evidence="1">
        <text>L-tryptophan + H2O = indole + pyruvate + NH4(+)</text>
        <dbReference type="Rhea" id="RHEA:19553"/>
        <dbReference type="ChEBI" id="CHEBI:15361"/>
        <dbReference type="ChEBI" id="CHEBI:15377"/>
        <dbReference type="ChEBI" id="CHEBI:16881"/>
        <dbReference type="ChEBI" id="CHEBI:28938"/>
        <dbReference type="ChEBI" id="CHEBI:57912"/>
        <dbReference type="EC" id="4.1.99.1"/>
    </reaction>
</comment>
<comment type="cofactor">
    <cofactor evidence="1">
        <name>pyridoxal 5'-phosphate</name>
        <dbReference type="ChEBI" id="CHEBI:597326"/>
    </cofactor>
</comment>
<comment type="pathway">
    <text evidence="1">Amino-acid degradation; L-tryptophan degradation via pyruvate pathway; indole and pyruvate from L-tryptophan: step 1/1.</text>
</comment>
<comment type="subunit">
    <text evidence="1">Homotetramer.</text>
</comment>
<comment type="similarity">
    <text evidence="1">Belongs to the beta-eliminating lyase family.</text>
</comment>
<reference key="1">
    <citation type="journal article" date="2009" name="PLoS Genet.">
        <title>Organised genome dynamics in the Escherichia coli species results in highly diverse adaptive paths.</title>
        <authorList>
            <person name="Touchon M."/>
            <person name="Hoede C."/>
            <person name="Tenaillon O."/>
            <person name="Barbe V."/>
            <person name="Baeriswyl S."/>
            <person name="Bidet P."/>
            <person name="Bingen E."/>
            <person name="Bonacorsi S."/>
            <person name="Bouchier C."/>
            <person name="Bouvet O."/>
            <person name="Calteau A."/>
            <person name="Chiapello H."/>
            <person name="Clermont O."/>
            <person name="Cruveiller S."/>
            <person name="Danchin A."/>
            <person name="Diard M."/>
            <person name="Dossat C."/>
            <person name="Karoui M.E."/>
            <person name="Frapy E."/>
            <person name="Garry L."/>
            <person name="Ghigo J.M."/>
            <person name="Gilles A.M."/>
            <person name="Johnson J."/>
            <person name="Le Bouguenec C."/>
            <person name="Lescat M."/>
            <person name="Mangenot S."/>
            <person name="Martinez-Jehanne V."/>
            <person name="Matic I."/>
            <person name="Nassif X."/>
            <person name="Oztas S."/>
            <person name="Petit M.A."/>
            <person name="Pichon C."/>
            <person name="Rouy Z."/>
            <person name="Ruf C.S."/>
            <person name="Schneider D."/>
            <person name="Tourret J."/>
            <person name="Vacherie B."/>
            <person name="Vallenet D."/>
            <person name="Medigue C."/>
            <person name="Rocha E.P.C."/>
            <person name="Denamur E."/>
        </authorList>
    </citation>
    <scope>NUCLEOTIDE SEQUENCE [LARGE SCALE GENOMIC DNA]</scope>
    <source>
        <strain>IAI39 / ExPEC</strain>
    </source>
</reference>
<proteinExistence type="inferred from homology"/>
<accession>B7NR10</accession>
<protein>
    <recommendedName>
        <fullName evidence="1">Tryptophanase</fullName>
        <ecNumber evidence="1">4.1.99.1</ecNumber>
    </recommendedName>
    <alternativeName>
        <fullName evidence="1">L-tryptophan indole-lyase</fullName>
        <shortName evidence="1">TNase</shortName>
    </alternativeName>
</protein>
<organism>
    <name type="scientific">Escherichia coli O7:K1 (strain IAI39 / ExPEC)</name>
    <dbReference type="NCBI Taxonomy" id="585057"/>
    <lineage>
        <taxon>Bacteria</taxon>
        <taxon>Pseudomonadati</taxon>
        <taxon>Pseudomonadota</taxon>
        <taxon>Gammaproteobacteria</taxon>
        <taxon>Enterobacterales</taxon>
        <taxon>Enterobacteriaceae</taxon>
        <taxon>Escherichia</taxon>
    </lineage>
</organism>
<evidence type="ECO:0000255" key="1">
    <source>
        <dbReference type="HAMAP-Rule" id="MF_00544"/>
    </source>
</evidence>
<feature type="chain" id="PRO_1000128908" description="Tryptophanase">
    <location>
        <begin position="1"/>
        <end position="471"/>
    </location>
</feature>
<feature type="modified residue" description="N6-acetyllysine" evidence="1">
    <location>
        <position position="5"/>
    </location>
</feature>
<feature type="modified residue" description="N6-acetyllysine" evidence="1">
    <location>
        <position position="115"/>
    </location>
</feature>
<feature type="modified residue" description="N6-acetyllysine" evidence="1">
    <location>
        <position position="156"/>
    </location>
</feature>
<feature type="modified residue" description="N6-(pyridoxal phosphate)lysine" evidence="1">
    <location>
        <position position="270"/>
    </location>
</feature>
<feature type="modified residue" description="N6-acetyllysine" evidence="1">
    <location>
        <position position="450"/>
    </location>
</feature>
<gene>
    <name evidence="1" type="primary">tnaA</name>
    <name type="ordered locus">ECIAI39_4312</name>
</gene>
<name>TNAA_ECO7I</name>
<dbReference type="EC" id="4.1.99.1" evidence="1"/>
<dbReference type="EMBL" id="CU928164">
    <property type="protein sequence ID" value="CAR20418.1"/>
    <property type="molecule type" value="Genomic_DNA"/>
</dbReference>
<dbReference type="RefSeq" id="WP_001295247.1">
    <property type="nucleotide sequence ID" value="NC_011750.1"/>
</dbReference>
<dbReference type="RefSeq" id="YP_002410187.1">
    <property type="nucleotide sequence ID" value="NC_011750.1"/>
</dbReference>
<dbReference type="SMR" id="B7NR10"/>
<dbReference type="STRING" id="585057.ECIAI39_4312"/>
<dbReference type="GeneID" id="75205423"/>
<dbReference type="KEGG" id="ect:ECIAI39_4312"/>
<dbReference type="PATRIC" id="fig|585057.6.peg.4457"/>
<dbReference type="HOGENOM" id="CLU_047223_0_0_6"/>
<dbReference type="UniPathway" id="UPA00332">
    <property type="reaction ID" value="UER00452"/>
</dbReference>
<dbReference type="Proteomes" id="UP000000749">
    <property type="component" value="Chromosome"/>
</dbReference>
<dbReference type="GO" id="GO:0009034">
    <property type="term" value="F:tryptophanase activity"/>
    <property type="evidence" value="ECO:0007669"/>
    <property type="project" value="UniProtKB-UniRule"/>
</dbReference>
<dbReference type="FunFam" id="3.40.640.10:FF:000039">
    <property type="entry name" value="Tryptophanase"/>
    <property type="match status" value="1"/>
</dbReference>
<dbReference type="Gene3D" id="3.90.1150.10">
    <property type="entry name" value="Aspartate Aminotransferase, domain 1"/>
    <property type="match status" value="1"/>
</dbReference>
<dbReference type="Gene3D" id="3.40.640.10">
    <property type="entry name" value="Type I PLP-dependent aspartate aminotransferase-like (Major domain)"/>
    <property type="match status" value="1"/>
</dbReference>
<dbReference type="HAMAP" id="MF_00544">
    <property type="entry name" value="Tryptophanase"/>
    <property type="match status" value="1"/>
</dbReference>
<dbReference type="InterPro" id="IPR001597">
    <property type="entry name" value="ArAA_b-elim_lyase/Thr_aldolase"/>
</dbReference>
<dbReference type="InterPro" id="IPR011166">
    <property type="entry name" value="Beta-eliminating_lyase"/>
</dbReference>
<dbReference type="InterPro" id="IPR015424">
    <property type="entry name" value="PyrdxlP-dep_Trfase"/>
</dbReference>
<dbReference type="InterPro" id="IPR015421">
    <property type="entry name" value="PyrdxlP-dep_Trfase_major"/>
</dbReference>
<dbReference type="InterPro" id="IPR015422">
    <property type="entry name" value="PyrdxlP-dep_Trfase_small"/>
</dbReference>
<dbReference type="InterPro" id="IPR013440">
    <property type="entry name" value="TNase"/>
</dbReference>
<dbReference type="InterPro" id="IPR018176">
    <property type="entry name" value="Tryptophanase_CS"/>
</dbReference>
<dbReference type="NCBIfam" id="NF009709">
    <property type="entry name" value="PRK13238.1"/>
    <property type="match status" value="1"/>
</dbReference>
<dbReference type="NCBIfam" id="TIGR02617">
    <property type="entry name" value="tnaA_trp_ase"/>
    <property type="match status" value="1"/>
</dbReference>
<dbReference type="PANTHER" id="PTHR32325">
    <property type="entry name" value="BETA-ELIMINATING LYASE-LIKE PROTEIN-RELATED"/>
    <property type="match status" value="1"/>
</dbReference>
<dbReference type="PANTHER" id="PTHR32325:SF4">
    <property type="entry name" value="TRYPTOPHANASE"/>
    <property type="match status" value="1"/>
</dbReference>
<dbReference type="Pfam" id="PF01212">
    <property type="entry name" value="Beta_elim_lyase"/>
    <property type="match status" value="1"/>
</dbReference>
<dbReference type="PIRSF" id="PIRSF001386">
    <property type="entry name" value="Trpase"/>
    <property type="match status" value="1"/>
</dbReference>
<dbReference type="SUPFAM" id="SSF53383">
    <property type="entry name" value="PLP-dependent transferases"/>
    <property type="match status" value="1"/>
</dbReference>
<dbReference type="PROSITE" id="PS00853">
    <property type="entry name" value="BETA_ELIM_LYASE"/>
    <property type="match status" value="1"/>
</dbReference>
<sequence>MENFKHLPEPFRIRVIEPVKRTTRAYREEAIIKSGMNPFLLDSEDVFIDLLTDSGTGAVTQSMQAAMMRGDEAYSGSRSYYALAESVKNIFGYQYTIPTHQGRGAEQIYIPVLIKKREQEKGLDRSKMVAFSNYFFDTTQGHSQINGCTVRNVYIKEAFDTGVRYDFKGNFDLEGLERGIEEVGPNNVPYIVATITSNSAGGQPVSLANLKAMYSIAKKYDIPVVMDSARFAENAYFIKQREAEYKDWTIEQITRETYKYADMLAMSAKKDAMVPMGGLLCMKDDSFFDVYTECRTLCVVQEGFPTYGGLEGGAMERLAVGLYDGMNLDWLAYRIAQVQYLVDGLEEIGVVCQQAGGHAAFVDAGKLLPHIPADQFPAQALACELYKVAGIRAVEIGSFLLGRDPKTGKQLPCPAELLRLTIPRATYTQTHMDFIIEAFKHVKENAANIKGLTFTYEPKVLRHFTAKLKEV</sequence>
<keyword id="KW-0007">Acetylation</keyword>
<keyword id="KW-0456">Lyase</keyword>
<keyword id="KW-0663">Pyridoxal phosphate</keyword>
<keyword id="KW-0823">Tryptophan catabolism</keyword>